<gene>
    <name type="primary">odr-7</name>
    <name type="ORF">T18D3.2</name>
</gene>
<protein>
    <recommendedName>
        <fullName>Nuclear hormone receptor family member odr-7</fullName>
    </recommendedName>
    <alternativeName>
        <fullName>Odorant response abnormal protein 7</fullName>
    </alternativeName>
</protein>
<dbReference type="EMBL" id="U16708">
    <property type="protein sequence ID" value="AAC46497.1"/>
    <property type="molecule type" value="mRNA"/>
</dbReference>
<dbReference type="EMBL" id="FJ455633">
    <property type="protein sequence ID" value="ACQ44083.1"/>
    <property type="molecule type" value="Genomic_DNA"/>
</dbReference>
<dbReference type="EMBL" id="FJ455634">
    <property type="protein sequence ID" value="ACQ44084.1"/>
    <property type="molecule type" value="Genomic_DNA"/>
</dbReference>
<dbReference type="EMBL" id="FJ455635">
    <property type="protein sequence ID" value="ACQ44085.1"/>
    <property type="molecule type" value="Genomic_DNA"/>
</dbReference>
<dbReference type="EMBL" id="FJ455636">
    <property type="protein sequence ID" value="ACQ44086.1"/>
    <property type="molecule type" value="Genomic_DNA"/>
</dbReference>
<dbReference type="EMBL" id="FJ455637">
    <property type="protein sequence ID" value="ACQ44087.1"/>
    <property type="molecule type" value="Genomic_DNA"/>
</dbReference>
<dbReference type="EMBL" id="FJ455638">
    <property type="protein sequence ID" value="ACQ44088.1"/>
    <property type="molecule type" value="Genomic_DNA"/>
</dbReference>
<dbReference type="EMBL" id="FJ455639">
    <property type="protein sequence ID" value="ACQ44089.1"/>
    <property type="molecule type" value="Genomic_DNA"/>
</dbReference>
<dbReference type="EMBL" id="FJ455640">
    <property type="protein sequence ID" value="ACQ44090.1"/>
    <property type="molecule type" value="Genomic_DNA"/>
</dbReference>
<dbReference type="EMBL" id="FJ455641">
    <property type="protein sequence ID" value="ACQ44091.1"/>
    <property type="molecule type" value="Genomic_DNA"/>
</dbReference>
<dbReference type="EMBL" id="FJ455642">
    <property type="protein sequence ID" value="ACQ44092.1"/>
    <property type="molecule type" value="Genomic_DNA"/>
</dbReference>
<dbReference type="EMBL" id="FJ455643">
    <property type="protein sequence ID" value="ACQ44093.1"/>
    <property type="molecule type" value="Genomic_DNA"/>
</dbReference>
<dbReference type="EMBL" id="FJ455644">
    <property type="protein sequence ID" value="ACQ44094.1"/>
    <property type="molecule type" value="Genomic_DNA"/>
</dbReference>
<dbReference type="EMBL" id="Z68119">
    <property type="protein sequence ID" value="CAA92192.1"/>
    <property type="molecule type" value="Genomic_DNA"/>
</dbReference>
<dbReference type="PIR" id="T24962">
    <property type="entry name" value="T24962"/>
</dbReference>
<dbReference type="RefSeq" id="NP_510089.1">
    <property type="nucleotide sequence ID" value="NM_077688.4"/>
</dbReference>
<dbReference type="SMR" id="P41933"/>
<dbReference type="BioGRID" id="46307">
    <property type="interactions" value="6"/>
</dbReference>
<dbReference type="FunCoup" id="P41933">
    <property type="interactions" value="600"/>
</dbReference>
<dbReference type="IntAct" id="P41933">
    <property type="interactions" value="6"/>
</dbReference>
<dbReference type="STRING" id="6239.T18D3.2.1"/>
<dbReference type="PaxDb" id="6239-T18D3.2"/>
<dbReference type="EnsemblMetazoa" id="T18D3.2.1">
    <property type="protein sequence ID" value="T18D3.2.1"/>
    <property type="gene ID" value="WBGene00003854"/>
</dbReference>
<dbReference type="GeneID" id="181403"/>
<dbReference type="KEGG" id="cel:CELE_T18D3.2"/>
<dbReference type="UCSC" id="T18D3.2">
    <property type="organism name" value="c. elegans"/>
</dbReference>
<dbReference type="AGR" id="WB:WBGene00003854"/>
<dbReference type="CTD" id="181403"/>
<dbReference type="WormBase" id="T18D3.2">
    <property type="protein sequence ID" value="CE03663"/>
    <property type="gene ID" value="WBGene00003854"/>
    <property type="gene designation" value="odr-7"/>
</dbReference>
<dbReference type="eggNOG" id="ENOG502S815">
    <property type="taxonomic scope" value="Eukaryota"/>
</dbReference>
<dbReference type="HOGENOM" id="CLU_614276_0_0_1"/>
<dbReference type="InParanoid" id="P41933"/>
<dbReference type="OMA" id="FNYEEQH"/>
<dbReference type="OrthoDB" id="9996608at2759"/>
<dbReference type="PRO" id="PR:P41933"/>
<dbReference type="Proteomes" id="UP000001940">
    <property type="component" value="Chromosome X"/>
</dbReference>
<dbReference type="Bgee" id="WBGene00003854">
    <property type="expression patterns" value="Expressed in pharyngeal muscle cell (C elegans)"/>
</dbReference>
<dbReference type="GO" id="GO:0005634">
    <property type="term" value="C:nucleus"/>
    <property type="evidence" value="ECO:0000314"/>
    <property type="project" value="WormBase"/>
</dbReference>
<dbReference type="GO" id="GO:0048471">
    <property type="term" value="C:perinuclear region of cytoplasm"/>
    <property type="evidence" value="ECO:0007669"/>
    <property type="project" value="UniProtKB-SubCell"/>
</dbReference>
<dbReference type="GO" id="GO:0001228">
    <property type="term" value="F:DNA-binding transcription activator activity, RNA polymerase II-specific"/>
    <property type="evidence" value="ECO:0000314"/>
    <property type="project" value="WormBase"/>
</dbReference>
<dbReference type="GO" id="GO:0003700">
    <property type="term" value="F:DNA-binding transcription factor activity"/>
    <property type="evidence" value="ECO:0000318"/>
    <property type="project" value="GO_Central"/>
</dbReference>
<dbReference type="GO" id="GO:0004879">
    <property type="term" value="F:nuclear receptor activity"/>
    <property type="evidence" value="ECO:0007669"/>
    <property type="project" value="InterPro"/>
</dbReference>
<dbReference type="GO" id="GO:0000978">
    <property type="term" value="F:RNA polymerase II cis-regulatory region sequence-specific DNA binding"/>
    <property type="evidence" value="ECO:0007669"/>
    <property type="project" value="InterPro"/>
</dbReference>
<dbReference type="GO" id="GO:0008270">
    <property type="term" value="F:zinc ion binding"/>
    <property type="evidence" value="ECO:0007669"/>
    <property type="project" value="UniProtKB-KW"/>
</dbReference>
<dbReference type="GO" id="GO:0022401">
    <property type="term" value="P:negative adaptation of signaling pathway"/>
    <property type="evidence" value="ECO:0000315"/>
    <property type="project" value="WormBase"/>
</dbReference>
<dbReference type="GO" id="GO:0050918">
    <property type="term" value="P:positive chemotaxis"/>
    <property type="evidence" value="ECO:0000315"/>
    <property type="project" value="WormBase"/>
</dbReference>
<dbReference type="GO" id="GO:0045944">
    <property type="term" value="P:positive regulation of transcription by RNA polymerase II"/>
    <property type="evidence" value="ECO:0000314"/>
    <property type="project" value="WormBase"/>
</dbReference>
<dbReference type="GO" id="GO:0006357">
    <property type="term" value="P:regulation of transcription by RNA polymerase II"/>
    <property type="evidence" value="ECO:0000318"/>
    <property type="project" value="GO_Central"/>
</dbReference>
<dbReference type="GO" id="GO:0007608">
    <property type="term" value="P:sensory perception of smell"/>
    <property type="evidence" value="ECO:0007669"/>
    <property type="project" value="UniProtKB-KW"/>
</dbReference>
<dbReference type="CDD" id="cd06960">
    <property type="entry name" value="NR_DBD_HNF4A"/>
    <property type="match status" value="1"/>
</dbReference>
<dbReference type="Gene3D" id="3.30.50.10">
    <property type="entry name" value="Erythroid Transcription Factor GATA-1, subunit A"/>
    <property type="match status" value="1"/>
</dbReference>
<dbReference type="InterPro" id="IPR049636">
    <property type="entry name" value="HNF4-like_DBD"/>
</dbReference>
<dbReference type="InterPro" id="IPR016355">
    <property type="entry name" value="NR5-like"/>
</dbReference>
<dbReference type="InterPro" id="IPR001628">
    <property type="entry name" value="Znf_hrmn_rcpt"/>
</dbReference>
<dbReference type="InterPro" id="IPR013088">
    <property type="entry name" value="Znf_NHR/GATA"/>
</dbReference>
<dbReference type="PANTHER" id="PTHR24086:SF43">
    <property type="entry name" value="NUCLEAR RECEPTOR DOMAIN-CONTAINING PROTEIN"/>
    <property type="match status" value="1"/>
</dbReference>
<dbReference type="PANTHER" id="PTHR24086">
    <property type="entry name" value="NUCLEAR RECEPTOR SUBFAMILY 5 GROUP A"/>
    <property type="match status" value="1"/>
</dbReference>
<dbReference type="Pfam" id="PF00105">
    <property type="entry name" value="zf-C4"/>
    <property type="match status" value="1"/>
</dbReference>
<dbReference type="PRINTS" id="PR00047">
    <property type="entry name" value="STROIDFINGER"/>
</dbReference>
<dbReference type="SMART" id="SM00399">
    <property type="entry name" value="ZnF_C4"/>
    <property type="match status" value="1"/>
</dbReference>
<dbReference type="SUPFAM" id="SSF57716">
    <property type="entry name" value="Glucocorticoid receptor-like (DNA-binding domain)"/>
    <property type="match status" value="1"/>
</dbReference>
<dbReference type="PROSITE" id="PS00031">
    <property type="entry name" value="NUCLEAR_REC_DBD_1"/>
    <property type="match status" value="1"/>
</dbReference>
<dbReference type="PROSITE" id="PS51030">
    <property type="entry name" value="NUCLEAR_REC_DBD_2"/>
    <property type="match status" value="1"/>
</dbReference>
<accession>P41933</accession>
<accession>C3U4U8</accession>
<accession>C3U4U9</accession>
<accession>C3U4V2</accession>
<proteinExistence type="evidence at protein level"/>
<comment type="function">
    <text evidence="3 4 5 6 10">Required for the function of one pair of chemosensory neurons called AWA neurons that are involved in chemotaxis to volatile odorants. Acts in a pathway that specifies olfactory neuronal fate. Regulates the transcription of olfactory signaling molecules such as odr-10 that specify AWA neuron identity and function. Represses the expression in AWA neurons of factors such as str-2 which specify AWC neuron identity.</text>
</comment>
<comment type="subunit">
    <text evidence="11">Heterodimer with a partner that confers DNA binding capacity or a nuclear hormone receptor whose DNA binding it inhibits.</text>
</comment>
<comment type="subcellular location">
    <subcellularLocation>
        <location>Nucleus</location>
    </subcellularLocation>
    <subcellularLocation>
        <location>Cytoplasm</location>
        <location>Perinuclear region</location>
    </subcellularLocation>
</comment>
<comment type="tissue specificity">
    <text evidence="3 4 5 6 9 10">Expressed predominantly in the AWA neurons.</text>
</comment>
<comment type="developmental stage">
    <text evidence="9">May be expressed at all postembryonic stages.</text>
</comment>
<comment type="induction">
    <text evidence="8">Down-regulated by the cyanotoxin microcystin-LR.</text>
</comment>
<comment type="disruption phenotype">
    <text evidence="6 9">Worms are defective in chemotaxis to the volatile odorants diacetyl and pyrazine and weakly defective in chemotaxis to 2,4,5-trimethylthiazole, but respond normally to the odorants benzaldehyde, butanone, and isoamyl alcohol.</text>
</comment>
<comment type="similarity">
    <text evidence="11">Belongs to the nuclear hormone receptor family. NR0 subfamily.</text>
</comment>
<name>ODR7_CAEEL</name>
<keyword id="KW-0145">Chemotaxis</keyword>
<keyword id="KW-0963">Cytoplasm</keyword>
<keyword id="KW-0238">DNA-binding</keyword>
<keyword id="KW-0479">Metal-binding</keyword>
<keyword id="KW-0539">Nucleus</keyword>
<keyword id="KW-0552">Olfaction</keyword>
<keyword id="KW-0675">Receptor</keyword>
<keyword id="KW-1185">Reference proteome</keyword>
<keyword id="KW-0678">Repressor</keyword>
<keyword id="KW-0716">Sensory transduction</keyword>
<keyword id="KW-0804">Transcription</keyword>
<keyword id="KW-0805">Transcription regulation</keyword>
<keyword id="KW-0862">Zinc</keyword>
<keyword id="KW-0863">Zinc-finger</keyword>
<sequence>MIVPDTEGLLIYSYGLMYGSYCMACQMLIPHFQCIPGIFPNFRISTELIKTMTDKLEQPNNNVPQQPWGPFPPAFGGRPSGEQTDGNPGEFDNDAAHQQTAPFMTHFFPRIGLQFPDFTEYQRFNGFQRNAFFPNPFGSQFTGQAFAQSFPLHNSMTTMDGFNLTHAPHPFSTNTNSTKPKDIENTVQSTIKHSSENIQDKPPVLSVEYPVKYDSELKFDANVDFTAVPKQESSDDSTLKNLKKSDQQLQQPQQFTFPPPLLAEKSFEQPRMREDVLPFHPQFYPAPLDMGTNFKQEMRTPPIDGHIDYRKFDASGKRMEFQPPGALHDCQVCLSTHANGLHFGARTCAACAAFFRRTISDDKRYVCKRNQRCNNASRDGTGYRKICRSCRMKRCLEIGMLPENVQHKRNRRDSGSPPRKTPFDTFFNGFYPSFQPSGSAAQPITVSSSESPRHTTN</sequence>
<organism>
    <name type="scientific">Caenorhabditis elegans</name>
    <dbReference type="NCBI Taxonomy" id="6239"/>
    <lineage>
        <taxon>Eukaryota</taxon>
        <taxon>Metazoa</taxon>
        <taxon>Ecdysozoa</taxon>
        <taxon>Nematoda</taxon>
        <taxon>Chromadorea</taxon>
        <taxon>Rhabditida</taxon>
        <taxon>Rhabditina</taxon>
        <taxon>Rhabditomorpha</taxon>
        <taxon>Rhabditoidea</taxon>
        <taxon>Rhabditidae</taxon>
        <taxon>Peloderinae</taxon>
        <taxon>Caenorhabditis</taxon>
    </lineage>
</organism>
<evidence type="ECO:0000255" key="1">
    <source>
        <dbReference type="PROSITE-ProRule" id="PRU00407"/>
    </source>
</evidence>
<evidence type="ECO:0000256" key="2">
    <source>
        <dbReference type="SAM" id="MobiDB-lite"/>
    </source>
</evidence>
<evidence type="ECO:0000269" key="3">
    <source>
    </source>
</evidence>
<evidence type="ECO:0000269" key="4">
    <source>
    </source>
</evidence>
<evidence type="ECO:0000269" key="5">
    <source>
    </source>
</evidence>
<evidence type="ECO:0000269" key="6">
    <source>
    </source>
</evidence>
<evidence type="ECO:0000269" key="7">
    <source>
    </source>
</evidence>
<evidence type="ECO:0000269" key="8">
    <source>
    </source>
</evidence>
<evidence type="ECO:0000269" key="9">
    <source>
    </source>
</evidence>
<evidence type="ECO:0000269" key="10">
    <source>
    </source>
</evidence>
<evidence type="ECO:0000305" key="11"/>
<reference key="1">
    <citation type="journal article" date="1994" name="Cell">
        <title>The C. elegans gene odr-7 encodes an olfactory-specific member of the nuclear receptor superfamily.</title>
        <authorList>
            <person name="Sengupta P."/>
            <person name="Colbert H.A."/>
            <person name="Bargmann C.I."/>
        </authorList>
    </citation>
    <scope>NUCLEOTIDE SEQUENCE [MRNA]</scope>
    <scope>SUBCELLULAR LOCATION</scope>
    <scope>TISSUE SPECIFICITY</scope>
    <scope>DEVELOPMENTAL STAGE</scope>
    <scope>DISRUPTION PHENOTYPE</scope>
    <scope>MUTAGENESIS OF GLY-340</scope>
    <source>
        <strain>Bristol N2</strain>
    </source>
</reference>
<reference key="2">
    <citation type="journal article" date="2009" name="Genetics">
        <title>High nucleotide divergence in developmental regulatory genes contrasts with the structural elements of olfactory pathways in caenorhabditis.</title>
        <authorList>
            <person name="Jovelin R."/>
            <person name="Dunham J.P."/>
            <person name="Sung F.S."/>
            <person name="Phillips P.C."/>
        </authorList>
    </citation>
    <scope>NUCLEOTIDE SEQUENCE [GENOMIC DNA]</scope>
    <scope>VARIANTS ASP-47; PRO-155 AND PRO-165</scope>
    <source>
        <strain>AB3</strain>
        <strain>BO</strain>
        <strain>CB4855</strain>
        <strain>CB4856</strain>
        <strain>CB4857</strain>
        <strain>CB4932</strain>
        <strain>DH424</strain>
        <strain>PX174</strain>
        <strain>PX178</strain>
        <strain>PX179</strain>
        <strain>RC301</strain>
        <strain>TR403</strain>
    </source>
</reference>
<reference key="3">
    <citation type="journal article" date="1998" name="Science">
        <title>Genome sequence of the nematode C. elegans: a platform for investigating biology.</title>
        <authorList>
            <consortium name="The C. elegans sequencing consortium"/>
        </authorList>
    </citation>
    <scope>NUCLEOTIDE SEQUENCE [LARGE SCALE GENOMIC DNA]</scope>
    <source>
        <strain>Bristol N2</strain>
    </source>
</reference>
<reference key="4">
    <citation type="journal article" date="1996" name="Cell">
        <title>odr-10 encodes a seven transmembrane domain olfactory receptor required for responses to the odorant diacetyl.</title>
        <authorList>
            <person name="Sengupta P."/>
            <person name="Chou J.H."/>
            <person name="Bargmann C.I."/>
        </authorList>
    </citation>
    <scope>FUNCTION</scope>
    <scope>TISSUE SPECIFICITY</scope>
</reference>
<reference key="5">
    <citation type="journal article" date="1999" name="Genes Dev.">
        <title>Alternative olfactory neuron fates are specified by the LIM homeobox gene lim-4.</title>
        <authorList>
            <person name="Sagasti A."/>
            <person name="Hobert O."/>
            <person name="Troemel E.R."/>
            <person name="Ruvkun G."/>
            <person name="Bargmann C.I."/>
        </authorList>
    </citation>
    <scope>FUNCTION</scope>
    <scope>TISSUE SPECIFICITY</scope>
</reference>
<reference key="6">
    <citation type="journal article" date="2000" name="Genes Dev.">
        <title>The forkhead domain gene unc-130 generates chemosensory neuron diversity in C. elegans.</title>
        <authorList>
            <person name="Sarafi-Reinach T.R."/>
            <person name="Sengupta P."/>
        </authorList>
    </citation>
    <scope>FUNCTION</scope>
    <scope>SUBCELLULAR LOCATION</scope>
    <scope>TISSUE SPECIFICITY</scope>
</reference>
<reference key="7">
    <citation type="journal article" date="2001" name="Development">
        <title>The lin-11 LIM homeobox gene specifies olfactory and chemosensory neuron fates in C. elegans.</title>
        <authorList>
            <person name="Sarafi-Reinach T.R."/>
            <person name="Melkman T."/>
            <person name="Hobert O."/>
            <person name="Sengupta P."/>
        </authorList>
    </citation>
    <scope>FUNCTION</scope>
    <scope>TISSUE SPECIFICITY</scope>
</reference>
<reference key="8">
    <citation type="journal article" date="2003" name="Genetics">
        <title>The divergent orphan nuclear receptor ODR-7 regulates olfactory neuron gene expression via multiple mechanisms in Caenorhabditis elegans.</title>
        <authorList>
            <person name="Colosimo M.E."/>
            <person name="Tran S."/>
            <person name="Sengupta P."/>
        </authorList>
    </citation>
    <scope>FUNCTION</scope>
    <scope>TISSUE SPECIFICITY</scope>
    <scope>DISRUPTION PHENOTYPE</scope>
    <scope>MUTAGENESIS OF GLY-340; ALA-349; ALA-350; ALA-353; ARG-356; ARG-372; 393-LYS-ARG-394 AND GLU-403</scope>
</reference>
<reference key="9">
    <citation type="journal article" date="2009" name="J. Environ. Sci.">
        <title>Induction of chemotaxis to sodium chloride and diacetyl and thermotaxis defects by microcystin-LR exposure in nematode Caenorhabditis elegans.</title>
        <authorList>
            <person name="Li Y."/>
            <person name="Ye H."/>
            <person name="Du M."/>
            <person name="Zhang Y."/>
            <person name="Ye B."/>
            <person name="Pu Y."/>
            <person name="Wang D."/>
        </authorList>
    </citation>
    <scope>INDUCTION</scope>
</reference>
<feature type="chain" id="PRO_0000053747" description="Nuclear hormone receptor family member odr-7">
    <location>
        <begin position="1"/>
        <end position="457"/>
    </location>
</feature>
<feature type="DNA-binding region" description="Nuclear receptor" evidence="1">
    <location>
        <begin position="327"/>
        <end position="407"/>
    </location>
</feature>
<feature type="zinc finger region" description="NR C4-type" evidence="1">
    <location>
        <begin position="330"/>
        <end position="351"/>
    </location>
</feature>
<feature type="zinc finger region" description="NR C4-type" evidence="1">
    <location>
        <begin position="367"/>
        <end position="395"/>
    </location>
</feature>
<feature type="region of interest" description="Disordered" evidence="2">
    <location>
        <begin position="57"/>
        <end position="95"/>
    </location>
</feature>
<feature type="region of interest" description="Disordered" evidence="2">
    <location>
        <begin position="230"/>
        <end position="252"/>
    </location>
</feature>
<feature type="region of interest" description="Disordered" evidence="2">
    <location>
        <begin position="435"/>
        <end position="457"/>
    </location>
</feature>
<feature type="sequence variant" description="In strain: CB4857." evidence="7">
    <original>E</original>
    <variation>D</variation>
    <location>
        <position position="47"/>
    </location>
</feature>
<feature type="sequence variant" description="In strain: CB4855." evidence="7">
    <original>S</original>
    <variation>P</variation>
    <location>
        <position position="155"/>
    </location>
</feature>
<feature type="sequence variant" description="In strain: CB4855." evidence="7">
    <original>T</original>
    <variation>P</variation>
    <location>
        <position position="165"/>
    </location>
</feature>
<feature type="mutagenesis site" description="In KY55; loss of chemotaxis to diacetyl." evidence="6 9">
    <original>G</original>
    <variation>E</variation>
    <location>
        <position position="340"/>
    </location>
</feature>
<feature type="mutagenesis site" description="Loss of autoregulation, loss of chemotaxis to diacetyl and pyrazine." evidence="6">
    <original>A</original>
    <variation>E</variation>
    <location>
        <position position="349"/>
    </location>
</feature>
<feature type="mutagenesis site" description="In OY43; loss of autoregulation, loss of chemotaxis to diacetyl and pyrazine." evidence="6">
    <original>A</original>
    <variation>V</variation>
    <location>
        <position position="350"/>
    </location>
</feature>
<feature type="mutagenesis site" description="No effect." evidence="6">
    <original>A</original>
    <variation>V</variation>
    <location>
        <position position="353"/>
    </location>
</feature>
<feature type="mutagenesis site" description="Loss of regulation of str-2 expression in AWA and AWC neurons, loss of autoregulation, loss of chemotaxis to diacetyl and pyrazine." evidence="6">
    <original>R</original>
    <variation>E</variation>
    <location>
        <position position="356"/>
    </location>
</feature>
<feature type="mutagenesis site" description="Loss of chemotaxis to diacetyl." evidence="6">
    <original>R</original>
    <variation>A</variation>
    <location>
        <position position="372"/>
    </location>
</feature>
<feature type="mutagenesis site" description="Loss of regulation of str-2 expression in AWC neurons, loss of chemotaxis to diacetyl and pyrazine." evidence="6">
    <original>KR</original>
    <variation>AG</variation>
    <location>
        <begin position="393"/>
        <end position="394"/>
    </location>
</feature>
<feature type="mutagenesis site" description="Loss of regulation of str-2 expression in AWC neurons." evidence="6">
    <original>E</original>
    <variation>Q</variation>
    <location>
        <position position="403"/>
    </location>
</feature>